<evidence type="ECO:0000255" key="1">
    <source>
        <dbReference type="HAMAP-Rule" id="MF_00453"/>
    </source>
</evidence>
<evidence type="ECO:0000305" key="2"/>
<feature type="chain" id="PRO_0000203810" description="Phosphoenolpyruvate carboxykinase (ATP)">
    <location>
        <begin position="1"/>
        <end position="527"/>
    </location>
</feature>
<feature type="binding site" evidence="1">
    <location>
        <position position="56"/>
    </location>
    <ligand>
        <name>substrate</name>
    </ligand>
</feature>
<feature type="binding site" evidence="1">
    <location>
        <position position="192"/>
    </location>
    <ligand>
        <name>substrate</name>
    </ligand>
</feature>
<feature type="binding site" evidence="1">
    <location>
        <position position="198"/>
    </location>
    <ligand>
        <name>ATP</name>
        <dbReference type="ChEBI" id="CHEBI:30616"/>
    </ligand>
</feature>
<feature type="binding site" evidence="1">
    <location>
        <position position="198"/>
    </location>
    <ligand>
        <name>Mn(2+)</name>
        <dbReference type="ChEBI" id="CHEBI:29035"/>
    </ligand>
</feature>
<feature type="binding site" evidence="1">
    <location>
        <position position="198"/>
    </location>
    <ligand>
        <name>substrate</name>
    </ligand>
</feature>
<feature type="binding site" evidence="1">
    <location>
        <position position="217"/>
    </location>
    <ligand>
        <name>ATP</name>
        <dbReference type="ChEBI" id="CHEBI:30616"/>
    </ligand>
</feature>
<feature type="binding site" evidence="1">
    <location>
        <position position="217"/>
    </location>
    <ligand>
        <name>Mn(2+)</name>
        <dbReference type="ChEBI" id="CHEBI:29035"/>
    </ligand>
</feature>
<feature type="binding site" evidence="1">
    <location>
        <begin position="233"/>
        <end position="241"/>
    </location>
    <ligand>
        <name>ATP</name>
        <dbReference type="ChEBI" id="CHEBI:30616"/>
    </ligand>
</feature>
<feature type="binding site" evidence="1">
    <location>
        <position position="254"/>
    </location>
    <ligand>
        <name>Mn(2+)</name>
        <dbReference type="ChEBI" id="CHEBI:29035"/>
    </ligand>
</feature>
<feature type="binding site" evidence="1">
    <location>
        <position position="282"/>
    </location>
    <ligand>
        <name>ATP</name>
        <dbReference type="ChEBI" id="CHEBI:30616"/>
    </ligand>
</feature>
<feature type="binding site" evidence="1">
    <location>
        <position position="319"/>
    </location>
    <ligand>
        <name>ATP</name>
        <dbReference type="ChEBI" id="CHEBI:30616"/>
    </ligand>
</feature>
<feature type="binding site" evidence="1">
    <location>
        <position position="319"/>
    </location>
    <ligand>
        <name>substrate</name>
    </ligand>
</feature>
<feature type="binding site" evidence="1">
    <location>
        <position position="444"/>
    </location>
    <ligand>
        <name>ATP</name>
        <dbReference type="ChEBI" id="CHEBI:30616"/>
    </ligand>
</feature>
<feature type="sequence conflict" description="In Ref. 3; AAB17065." evidence="2" ref="3">
    <original>L</original>
    <variation>S</variation>
    <location>
        <position position="10"/>
    </location>
</feature>
<feature type="sequence conflict" description="In Ref. 1; AAC00377." evidence="2" ref="1">
    <original>A</original>
    <variation>V</variation>
    <location>
        <position position="364"/>
    </location>
</feature>
<organism>
    <name type="scientific">Bacillus subtilis (strain 168)</name>
    <dbReference type="NCBI Taxonomy" id="224308"/>
    <lineage>
        <taxon>Bacteria</taxon>
        <taxon>Bacillati</taxon>
        <taxon>Bacillota</taxon>
        <taxon>Bacilli</taxon>
        <taxon>Bacillales</taxon>
        <taxon>Bacillaceae</taxon>
        <taxon>Bacillus</taxon>
    </lineage>
</organism>
<proteinExistence type="inferred from homology"/>
<keyword id="KW-0067">ATP-binding</keyword>
<keyword id="KW-0963">Cytoplasm</keyword>
<keyword id="KW-0210">Decarboxylase</keyword>
<keyword id="KW-0312">Gluconeogenesis</keyword>
<keyword id="KW-0456">Lyase</keyword>
<keyword id="KW-0464">Manganese</keyword>
<keyword id="KW-0479">Metal-binding</keyword>
<keyword id="KW-0547">Nucleotide-binding</keyword>
<keyword id="KW-1185">Reference proteome</keyword>
<accession>P54418</accession>
<accession>O34304</accession>
<dbReference type="EC" id="4.1.1.49" evidence="1"/>
<dbReference type="EMBL" id="AF008220">
    <property type="protein sequence ID" value="AAC00377.1"/>
    <property type="molecule type" value="Genomic_DNA"/>
</dbReference>
<dbReference type="EMBL" id="AL009126">
    <property type="protein sequence ID" value="CAB15034.2"/>
    <property type="molecule type" value="Genomic_DNA"/>
</dbReference>
<dbReference type="EMBL" id="U52812">
    <property type="protein sequence ID" value="AAB17065.1"/>
    <property type="molecule type" value="Genomic_DNA"/>
</dbReference>
<dbReference type="PIR" id="F69673">
    <property type="entry name" value="F69673"/>
</dbReference>
<dbReference type="RefSeq" id="NP_390934.2">
    <property type="nucleotide sequence ID" value="NC_000964.3"/>
</dbReference>
<dbReference type="RefSeq" id="WP_003229100.1">
    <property type="nucleotide sequence ID" value="NZ_OZ025638.1"/>
</dbReference>
<dbReference type="SMR" id="P54418"/>
<dbReference type="FunCoup" id="P54418">
    <property type="interactions" value="360"/>
</dbReference>
<dbReference type="STRING" id="224308.BSU30560"/>
<dbReference type="jPOST" id="P54418"/>
<dbReference type="PaxDb" id="224308-BSU30560"/>
<dbReference type="EnsemblBacteria" id="CAB15034">
    <property type="protein sequence ID" value="CAB15034"/>
    <property type="gene ID" value="BSU_30560"/>
</dbReference>
<dbReference type="GeneID" id="937235"/>
<dbReference type="KEGG" id="bsu:BSU30560"/>
<dbReference type="PATRIC" id="fig|224308.179.peg.3314"/>
<dbReference type="eggNOG" id="COG1866">
    <property type="taxonomic scope" value="Bacteria"/>
</dbReference>
<dbReference type="InParanoid" id="P54418"/>
<dbReference type="OrthoDB" id="9806325at2"/>
<dbReference type="PhylomeDB" id="P54418"/>
<dbReference type="BioCyc" id="BSUB:BSU30560-MONOMER"/>
<dbReference type="UniPathway" id="UPA00138"/>
<dbReference type="Proteomes" id="UP000001570">
    <property type="component" value="Chromosome"/>
</dbReference>
<dbReference type="GO" id="GO:0005829">
    <property type="term" value="C:cytosol"/>
    <property type="evidence" value="ECO:0000318"/>
    <property type="project" value="GO_Central"/>
</dbReference>
<dbReference type="GO" id="GO:0005524">
    <property type="term" value="F:ATP binding"/>
    <property type="evidence" value="ECO:0007669"/>
    <property type="project" value="UniProtKB-UniRule"/>
</dbReference>
<dbReference type="GO" id="GO:0046872">
    <property type="term" value="F:metal ion binding"/>
    <property type="evidence" value="ECO:0007669"/>
    <property type="project" value="UniProtKB-KW"/>
</dbReference>
<dbReference type="GO" id="GO:0004612">
    <property type="term" value="F:phosphoenolpyruvate carboxykinase (ATP) activity"/>
    <property type="evidence" value="ECO:0000318"/>
    <property type="project" value="GO_Central"/>
</dbReference>
<dbReference type="GO" id="GO:0006094">
    <property type="term" value="P:gluconeogenesis"/>
    <property type="evidence" value="ECO:0000318"/>
    <property type="project" value="GO_Central"/>
</dbReference>
<dbReference type="CDD" id="cd00484">
    <property type="entry name" value="PEPCK_ATP"/>
    <property type="match status" value="1"/>
</dbReference>
<dbReference type="FunFam" id="2.170.8.10:FF:000001">
    <property type="entry name" value="Phosphoenolpyruvate carboxykinase (ATP)"/>
    <property type="match status" value="1"/>
</dbReference>
<dbReference type="FunFam" id="3.40.449.10:FF:000001">
    <property type="entry name" value="Phosphoenolpyruvate carboxykinase (ATP)"/>
    <property type="match status" value="1"/>
</dbReference>
<dbReference type="Gene3D" id="3.90.228.20">
    <property type="match status" value="1"/>
</dbReference>
<dbReference type="Gene3D" id="3.40.449.10">
    <property type="entry name" value="Phosphoenolpyruvate Carboxykinase, domain 1"/>
    <property type="match status" value="1"/>
</dbReference>
<dbReference type="Gene3D" id="2.170.8.10">
    <property type="entry name" value="Phosphoenolpyruvate Carboxykinase, domain 2"/>
    <property type="match status" value="1"/>
</dbReference>
<dbReference type="HAMAP" id="MF_00453">
    <property type="entry name" value="PEPCK_ATP"/>
    <property type="match status" value="1"/>
</dbReference>
<dbReference type="InterPro" id="IPR001272">
    <property type="entry name" value="PEP_carboxykinase_ATP"/>
</dbReference>
<dbReference type="InterPro" id="IPR013035">
    <property type="entry name" value="PEP_carboxykinase_C"/>
</dbReference>
<dbReference type="InterPro" id="IPR008210">
    <property type="entry name" value="PEP_carboxykinase_N"/>
</dbReference>
<dbReference type="InterPro" id="IPR015994">
    <property type="entry name" value="PEPCK_ATP_CS"/>
</dbReference>
<dbReference type="NCBIfam" id="TIGR00224">
    <property type="entry name" value="pckA"/>
    <property type="match status" value="1"/>
</dbReference>
<dbReference type="NCBIfam" id="NF006820">
    <property type="entry name" value="PRK09344.1-2"/>
    <property type="match status" value="1"/>
</dbReference>
<dbReference type="NCBIfam" id="NF006821">
    <property type="entry name" value="PRK09344.1-3"/>
    <property type="match status" value="1"/>
</dbReference>
<dbReference type="PANTHER" id="PTHR30031:SF0">
    <property type="entry name" value="PHOSPHOENOLPYRUVATE CARBOXYKINASE (ATP)"/>
    <property type="match status" value="1"/>
</dbReference>
<dbReference type="PANTHER" id="PTHR30031">
    <property type="entry name" value="PHOSPHOENOLPYRUVATE CARBOXYKINASE ATP"/>
    <property type="match status" value="1"/>
</dbReference>
<dbReference type="Pfam" id="PF01293">
    <property type="entry name" value="PEPCK_ATP"/>
    <property type="match status" value="1"/>
</dbReference>
<dbReference type="PIRSF" id="PIRSF006294">
    <property type="entry name" value="PEP_crbxkin"/>
    <property type="match status" value="1"/>
</dbReference>
<dbReference type="SUPFAM" id="SSF68923">
    <property type="entry name" value="PEP carboxykinase N-terminal domain"/>
    <property type="match status" value="1"/>
</dbReference>
<dbReference type="SUPFAM" id="SSF53795">
    <property type="entry name" value="PEP carboxykinase-like"/>
    <property type="match status" value="1"/>
</dbReference>
<dbReference type="PROSITE" id="PS00532">
    <property type="entry name" value="PEPCK_ATP"/>
    <property type="match status" value="1"/>
</dbReference>
<comment type="function">
    <text evidence="1">Involved in the gluconeogenesis. Catalyzes the conversion of oxaloacetate (OAA) to phosphoenolpyruvate (PEP) through direct phosphoryl transfer between the nucleoside triphosphate and OAA.</text>
</comment>
<comment type="catalytic activity">
    <reaction evidence="1">
        <text>oxaloacetate + ATP = phosphoenolpyruvate + ADP + CO2</text>
        <dbReference type="Rhea" id="RHEA:18617"/>
        <dbReference type="ChEBI" id="CHEBI:16452"/>
        <dbReference type="ChEBI" id="CHEBI:16526"/>
        <dbReference type="ChEBI" id="CHEBI:30616"/>
        <dbReference type="ChEBI" id="CHEBI:58702"/>
        <dbReference type="ChEBI" id="CHEBI:456216"/>
        <dbReference type="EC" id="4.1.1.49"/>
    </reaction>
</comment>
<comment type="cofactor">
    <cofactor evidence="1">
        <name>Mn(2+)</name>
        <dbReference type="ChEBI" id="CHEBI:29035"/>
    </cofactor>
    <text evidence="1">Binds 1 Mn(2+) ion per subunit.</text>
</comment>
<comment type="pathway">
    <text evidence="1">Carbohydrate biosynthesis; gluconeogenesis.</text>
</comment>
<comment type="subcellular location">
    <subcellularLocation>
        <location evidence="1">Cytoplasm</location>
    </subcellularLocation>
</comment>
<comment type="similarity">
    <text evidence="1">Belongs to the phosphoenolpyruvate carboxykinase (ATP) family.</text>
</comment>
<name>PCKA_BACSU</name>
<gene>
    <name evidence="1" type="primary">pckA</name>
    <name type="synonym">ppc</name>
    <name type="ordered locus">BSU30560</name>
</gene>
<reference key="1">
    <citation type="journal article" date="1997" name="Microbiology">
        <title>Sequencing and functional annotation of the Bacillus subtilis genes in the 200 kb rrnB-dnaB region.</title>
        <authorList>
            <person name="Lapidus A."/>
            <person name="Galleron N."/>
            <person name="Sorokin A."/>
            <person name="Ehrlich S.D."/>
        </authorList>
    </citation>
    <scope>NUCLEOTIDE SEQUENCE [GENOMIC DNA]</scope>
    <source>
        <strain>168</strain>
    </source>
</reference>
<reference key="2">
    <citation type="journal article" date="1997" name="Nature">
        <title>The complete genome sequence of the Gram-positive bacterium Bacillus subtilis.</title>
        <authorList>
            <person name="Kunst F."/>
            <person name="Ogasawara N."/>
            <person name="Moszer I."/>
            <person name="Albertini A.M."/>
            <person name="Alloni G."/>
            <person name="Azevedo V."/>
            <person name="Bertero M.G."/>
            <person name="Bessieres P."/>
            <person name="Bolotin A."/>
            <person name="Borchert S."/>
            <person name="Borriss R."/>
            <person name="Boursier L."/>
            <person name="Brans A."/>
            <person name="Braun M."/>
            <person name="Brignell S.C."/>
            <person name="Bron S."/>
            <person name="Brouillet S."/>
            <person name="Bruschi C.V."/>
            <person name="Caldwell B."/>
            <person name="Capuano V."/>
            <person name="Carter N.M."/>
            <person name="Choi S.-K."/>
            <person name="Codani J.-J."/>
            <person name="Connerton I.F."/>
            <person name="Cummings N.J."/>
            <person name="Daniel R.A."/>
            <person name="Denizot F."/>
            <person name="Devine K.M."/>
            <person name="Duesterhoeft A."/>
            <person name="Ehrlich S.D."/>
            <person name="Emmerson P.T."/>
            <person name="Entian K.-D."/>
            <person name="Errington J."/>
            <person name="Fabret C."/>
            <person name="Ferrari E."/>
            <person name="Foulger D."/>
            <person name="Fritz C."/>
            <person name="Fujita M."/>
            <person name="Fujita Y."/>
            <person name="Fuma S."/>
            <person name="Galizzi A."/>
            <person name="Galleron N."/>
            <person name="Ghim S.-Y."/>
            <person name="Glaser P."/>
            <person name="Goffeau A."/>
            <person name="Golightly E.J."/>
            <person name="Grandi G."/>
            <person name="Guiseppi G."/>
            <person name="Guy B.J."/>
            <person name="Haga K."/>
            <person name="Haiech J."/>
            <person name="Harwood C.R."/>
            <person name="Henaut A."/>
            <person name="Hilbert H."/>
            <person name="Holsappel S."/>
            <person name="Hosono S."/>
            <person name="Hullo M.-F."/>
            <person name="Itaya M."/>
            <person name="Jones L.-M."/>
            <person name="Joris B."/>
            <person name="Karamata D."/>
            <person name="Kasahara Y."/>
            <person name="Klaerr-Blanchard M."/>
            <person name="Klein C."/>
            <person name="Kobayashi Y."/>
            <person name="Koetter P."/>
            <person name="Koningstein G."/>
            <person name="Krogh S."/>
            <person name="Kumano M."/>
            <person name="Kurita K."/>
            <person name="Lapidus A."/>
            <person name="Lardinois S."/>
            <person name="Lauber J."/>
            <person name="Lazarevic V."/>
            <person name="Lee S.-M."/>
            <person name="Levine A."/>
            <person name="Liu H."/>
            <person name="Masuda S."/>
            <person name="Mauel C."/>
            <person name="Medigue C."/>
            <person name="Medina N."/>
            <person name="Mellado R.P."/>
            <person name="Mizuno M."/>
            <person name="Moestl D."/>
            <person name="Nakai S."/>
            <person name="Noback M."/>
            <person name="Noone D."/>
            <person name="O'Reilly M."/>
            <person name="Ogawa K."/>
            <person name="Ogiwara A."/>
            <person name="Oudega B."/>
            <person name="Park S.-H."/>
            <person name="Parro V."/>
            <person name="Pohl T.M."/>
            <person name="Portetelle D."/>
            <person name="Porwollik S."/>
            <person name="Prescott A.M."/>
            <person name="Presecan E."/>
            <person name="Pujic P."/>
            <person name="Purnelle B."/>
            <person name="Rapoport G."/>
            <person name="Rey M."/>
            <person name="Reynolds S."/>
            <person name="Rieger M."/>
            <person name="Rivolta C."/>
            <person name="Rocha E."/>
            <person name="Roche B."/>
            <person name="Rose M."/>
            <person name="Sadaie Y."/>
            <person name="Sato T."/>
            <person name="Scanlan E."/>
            <person name="Schleich S."/>
            <person name="Schroeter R."/>
            <person name="Scoffone F."/>
            <person name="Sekiguchi J."/>
            <person name="Sekowska A."/>
            <person name="Seror S.J."/>
            <person name="Serror P."/>
            <person name="Shin B.-S."/>
            <person name="Soldo B."/>
            <person name="Sorokin A."/>
            <person name="Tacconi E."/>
            <person name="Takagi T."/>
            <person name="Takahashi H."/>
            <person name="Takemaru K."/>
            <person name="Takeuchi M."/>
            <person name="Tamakoshi A."/>
            <person name="Tanaka T."/>
            <person name="Terpstra P."/>
            <person name="Tognoni A."/>
            <person name="Tosato V."/>
            <person name="Uchiyama S."/>
            <person name="Vandenbol M."/>
            <person name="Vannier F."/>
            <person name="Vassarotti A."/>
            <person name="Viari A."/>
            <person name="Wambutt R."/>
            <person name="Wedler E."/>
            <person name="Wedler H."/>
            <person name="Weitzenegger T."/>
            <person name="Winters P."/>
            <person name="Wipat A."/>
            <person name="Yamamoto H."/>
            <person name="Yamane K."/>
            <person name="Yasumoto K."/>
            <person name="Yata K."/>
            <person name="Yoshida K."/>
            <person name="Yoshikawa H.-F."/>
            <person name="Zumstein E."/>
            <person name="Yoshikawa H."/>
            <person name="Danchin A."/>
        </authorList>
    </citation>
    <scope>NUCLEOTIDE SEQUENCE [LARGE SCALE GENOMIC DNA]</scope>
    <source>
        <strain>168</strain>
    </source>
</reference>
<reference key="3">
    <citation type="journal article" date="2009" name="Microbiology">
        <title>From a consortium sequence to a unified sequence: the Bacillus subtilis 168 reference genome a decade later.</title>
        <authorList>
            <person name="Barbe V."/>
            <person name="Cruveiller S."/>
            <person name="Kunst F."/>
            <person name="Lenoble P."/>
            <person name="Meurice G."/>
            <person name="Sekowska A."/>
            <person name="Vallenet D."/>
            <person name="Wang T."/>
            <person name="Moszer I."/>
            <person name="Medigue C."/>
            <person name="Danchin A."/>
        </authorList>
    </citation>
    <scope>SEQUENCE REVISION TO 364</scope>
</reference>
<reference key="4">
    <citation type="journal article" date="1996" name="J. Bacteriol.">
        <title>Cloning and characterization of the metE gene encoding S-adenosylmethionine synthetase from Bacillus subtilis.</title>
        <authorList>
            <person name="Yocum R."/>
            <person name="Perkins J.B."/>
            <person name="Howitt C.L."/>
            <person name="Pero J."/>
        </authorList>
    </citation>
    <scope>NUCLEOTIDE SEQUENCE [GENOMIC DNA] OF 1-165</scope>
    <source>
        <strain>168 / PY79</strain>
    </source>
</reference>
<sequence length="527" mass="58272">MNSVDLTADLQALLTCPNVRHNLSAAQLTEKVLSRNEGILTSTGAVRATTGAYTGRSPKDKFIVEEESTKNKIDWGPVNQPISEEAFERLYTKVVSYLKERDELFVFEGFAGADEKYRLPITVVNEFAWHNLFARQLFIRPEGNDKKTVEQPFTILSAPHFKADPKTDGTHSETFIIVSFEKRTILIGGTEYAGEMKKSIFSIMNFLLPERDILSMHCSANVGEKGDVALFFGLSGTGKTTLSADADRKLIGDDEHGWSDTGVFNIEGGCYAKCIHLSEEKEPQIFNAIRFGSVLENVVVDEDTREANYDDSFYTENTRAAYPIHMINNIVTPSMAGHPSAIVFLTADAFGVLPPISKLTKEQAMYHFLSGYTSKLAGTERGVTSPETTFSTCFGSPFLPLPAHVYAEMLGKKIDEHGADVFLVNTGWTGGGYGTGERMKLSYTRAMVKAAIEGKLEDAEMITDDIFGLHIPAHVPGVPDHILQPENTWTNKEEYKEKAVYLANEFKENFKKFAHTDAIAQAGGPLV</sequence>
<protein>
    <recommendedName>
        <fullName evidence="1">Phosphoenolpyruvate carboxykinase (ATP)</fullName>
        <shortName evidence="1">PCK</shortName>
        <shortName evidence="1">PEP carboxykinase</shortName>
        <shortName evidence="1">PEPCK</shortName>
        <ecNumber evidence="1">4.1.1.49</ecNumber>
    </recommendedName>
</protein>